<proteinExistence type="inferred from homology"/>
<name>FTSK_STRP6</name>
<protein>
    <recommendedName>
        <fullName>DNA translocase FtsK</fullName>
    </recommendedName>
</protein>
<feature type="chain" id="PRO_0000098310" description="DNA translocase FtsK">
    <location>
        <begin position="1"/>
        <end position="801"/>
    </location>
</feature>
<feature type="transmembrane region" description="Helical" evidence="2">
    <location>
        <begin position="31"/>
        <end position="53"/>
    </location>
</feature>
<feature type="transmembrane region" description="Helical" evidence="2">
    <location>
        <begin position="58"/>
        <end position="80"/>
    </location>
</feature>
<feature type="transmembrane region" description="Helical" evidence="2">
    <location>
        <begin position="89"/>
        <end position="111"/>
    </location>
</feature>
<feature type="transmembrane region" description="Helical" evidence="2">
    <location>
        <begin position="131"/>
        <end position="150"/>
    </location>
</feature>
<feature type="transmembrane region" description="Helical" evidence="2">
    <location>
        <begin position="155"/>
        <end position="177"/>
    </location>
</feature>
<feature type="topological domain" description="Cytoplasmic" evidence="2">
    <location>
        <begin position="178"/>
        <end position="801"/>
    </location>
</feature>
<feature type="domain" description="FtsK" evidence="3">
    <location>
        <begin position="464"/>
        <end position="660"/>
    </location>
</feature>
<feature type="region of interest" description="Disordered" evidence="4">
    <location>
        <begin position="720"/>
        <end position="739"/>
    </location>
</feature>
<feature type="binding site" evidence="3">
    <location>
        <begin position="484"/>
        <end position="489"/>
    </location>
    <ligand>
        <name>ATP</name>
        <dbReference type="ChEBI" id="CHEBI:30616"/>
    </ligand>
</feature>
<keyword id="KW-0067">ATP-binding</keyword>
<keyword id="KW-0131">Cell cycle</keyword>
<keyword id="KW-0132">Cell division</keyword>
<keyword id="KW-1003">Cell membrane</keyword>
<keyword id="KW-0159">Chromosome partition</keyword>
<keyword id="KW-0238">DNA-binding</keyword>
<keyword id="KW-0472">Membrane</keyword>
<keyword id="KW-0547">Nucleotide-binding</keyword>
<keyword id="KW-0812">Transmembrane</keyword>
<keyword id="KW-1133">Transmembrane helix</keyword>
<organism>
    <name type="scientific">Streptococcus pyogenes serotype M6 (strain ATCC BAA-946 / MGAS10394)</name>
    <dbReference type="NCBI Taxonomy" id="286636"/>
    <lineage>
        <taxon>Bacteria</taxon>
        <taxon>Bacillati</taxon>
        <taxon>Bacillota</taxon>
        <taxon>Bacilli</taxon>
        <taxon>Lactobacillales</taxon>
        <taxon>Streptococcaceae</taxon>
        <taxon>Streptococcus</taxon>
    </lineage>
</organism>
<dbReference type="EMBL" id="CP000003">
    <property type="protein sequence ID" value="AAT86531.1"/>
    <property type="molecule type" value="Genomic_DNA"/>
</dbReference>
<dbReference type="RefSeq" id="WP_011184246.1">
    <property type="nucleotide sequence ID" value="NC_006086.1"/>
</dbReference>
<dbReference type="SMR" id="Q5XDI2"/>
<dbReference type="KEGG" id="spa:M6_Spy0396"/>
<dbReference type="HOGENOM" id="CLU_001981_9_6_9"/>
<dbReference type="Proteomes" id="UP000001167">
    <property type="component" value="Chromosome"/>
</dbReference>
<dbReference type="GO" id="GO:0005886">
    <property type="term" value="C:plasma membrane"/>
    <property type="evidence" value="ECO:0007669"/>
    <property type="project" value="UniProtKB-SubCell"/>
</dbReference>
<dbReference type="GO" id="GO:0005524">
    <property type="term" value="F:ATP binding"/>
    <property type="evidence" value="ECO:0007669"/>
    <property type="project" value="UniProtKB-KW"/>
</dbReference>
<dbReference type="GO" id="GO:0016887">
    <property type="term" value="F:ATP hydrolysis activity"/>
    <property type="evidence" value="ECO:0007669"/>
    <property type="project" value="InterPro"/>
</dbReference>
<dbReference type="GO" id="GO:0003677">
    <property type="term" value="F:DNA binding"/>
    <property type="evidence" value="ECO:0007669"/>
    <property type="project" value="UniProtKB-KW"/>
</dbReference>
<dbReference type="GO" id="GO:0051301">
    <property type="term" value="P:cell division"/>
    <property type="evidence" value="ECO:0007669"/>
    <property type="project" value="UniProtKB-KW"/>
</dbReference>
<dbReference type="GO" id="GO:0007059">
    <property type="term" value="P:chromosome segregation"/>
    <property type="evidence" value="ECO:0007669"/>
    <property type="project" value="UniProtKB-KW"/>
</dbReference>
<dbReference type="Gene3D" id="3.30.980.40">
    <property type="match status" value="1"/>
</dbReference>
<dbReference type="Gene3D" id="3.40.50.300">
    <property type="entry name" value="P-loop containing nucleotide triphosphate hydrolases"/>
    <property type="match status" value="1"/>
</dbReference>
<dbReference type="Gene3D" id="1.10.10.10">
    <property type="entry name" value="Winged helix-like DNA-binding domain superfamily/Winged helix DNA-binding domain"/>
    <property type="match status" value="1"/>
</dbReference>
<dbReference type="InterPro" id="IPR003593">
    <property type="entry name" value="AAA+_ATPase"/>
</dbReference>
<dbReference type="InterPro" id="IPR050206">
    <property type="entry name" value="FtsK/SpoIIIE/SftA"/>
</dbReference>
<dbReference type="InterPro" id="IPR041027">
    <property type="entry name" value="FtsK_alpha"/>
</dbReference>
<dbReference type="InterPro" id="IPR002543">
    <property type="entry name" value="FtsK_dom"/>
</dbReference>
<dbReference type="InterPro" id="IPR018541">
    <property type="entry name" value="Ftsk_gamma"/>
</dbReference>
<dbReference type="InterPro" id="IPR027417">
    <property type="entry name" value="P-loop_NTPase"/>
</dbReference>
<dbReference type="InterPro" id="IPR036388">
    <property type="entry name" value="WH-like_DNA-bd_sf"/>
</dbReference>
<dbReference type="InterPro" id="IPR036390">
    <property type="entry name" value="WH_DNA-bd_sf"/>
</dbReference>
<dbReference type="PANTHER" id="PTHR22683:SF41">
    <property type="entry name" value="DNA TRANSLOCASE FTSK"/>
    <property type="match status" value="1"/>
</dbReference>
<dbReference type="PANTHER" id="PTHR22683">
    <property type="entry name" value="SPORULATION PROTEIN RELATED"/>
    <property type="match status" value="1"/>
</dbReference>
<dbReference type="Pfam" id="PF17854">
    <property type="entry name" value="FtsK_alpha"/>
    <property type="match status" value="1"/>
</dbReference>
<dbReference type="Pfam" id="PF09397">
    <property type="entry name" value="FtsK_gamma"/>
    <property type="match status" value="1"/>
</dbReference>
<dbReference type="Pfam" id="PF01580">
    <property type="entry name" value="FtsK_SpoIIIE"/>
    <property type="match status" value="1"/>
</dbReference>
<dbReference type="SMART" id="SM00382">
    <property type="entry name" value="AAA"/>
    <property type="match status" value="1"/>
</dbReference>
<dbReference type="SMART" id="SM00843">
    <property type="entry name" value="Ftsk_gamma"/>
    <property type="match status" value="1"/>
</dbReference>
<dbReference type="SUPFAM" id="SSF52540">
    <property type="entry name" value="P-loop containing nucleoside triphosphate hydrolases"/>
    <property type="match status" value="1"/>
</dbReference>
<dbReference type="SUPFAM" id="SSF46785">
    <property type="entry name" value="Winged helix' DNA-binding domain"/>
    <property type="match status" value="1"/>
</dbReference>
<dbReference type="PROSITE" id="PS50901">
    <property type="entry name" value="FTSK"/>
    <property type="match status" value="1"/>
</dbReference>
<reference key="1">
    <citation type="journal article" date="2004" name="J. Infect. Dis.">
        <title>Progress toward characterization of the group A Streptococcus metagenome: complete genome sequence of a macrolide-resistant serotype M6 strain.</title>
        <authorList>
            <person name="Banks D.J."/>
            <person name="Porcella S.F."/>
            <person name="Barbian K.D."/>
            <person name="Beres S.B."/>
            <person name="Philips L.E."/>
            <person name="Voyich J.M."/>
            <person name="DeLeo F.R."/>
            <person name="Martin J.M."/>
            <person name="Somerville G.A."/>
            <person name="Musser J.M."/>
        </authorList>
    </citation>
    <scope>NUCLEOTIDE SEQUENCE [LARGE SCALE GENOMIC DNA]</scope>
    <source>
        <strain>ATCC BAA-946 / MGAS10394</strain>
    </source>
</reference>
<sequence length="801" mass="89272">MVKRNQRKKSAPKKRLTKAEVEKQRAIKRMILSVLMALLLIFAMLRLGVFGVTTYNMIRFLVGSLAYPFMFAWLIYLFCFKWLRQKDGMIAGVVIAFLGLLVEWHAFLFAMPRMLDQDIFLGTARLITRDLLALRVTEFVGGGMLGALLYKPIAFLFSNIGSYFIGFLFILLGLFLMTPWDIYDVSHFVKEAVDKLAVAYQENKEKRFIKREEHRLQAEKEALEKQAQEEEKRLAELTVDPETGEIVEDSQSQVSYDLAEDMTKEPEILAYDSHLKDDEASLFDQEDLAYAHEEIGAYDSLSALASSEDEMDMDEPVEVDFTPKTHLLYKLPTIDLFAPDKPKNQSKEKNLVRKNIKVLEDTFQSFGIDVKVERAEIGPSVTKYEIKPAVGVRVNRISNLADDLALALAAKDVRIEAPIPGKSLIGIEVPNSEIATVSFRELWEQSDANPENLLEVPLGKAVNGNARSFNLARMPHLLVAGSTGSGKSVAVNGIISSILMKARPDQVKFMMIDPKMVELSVYNDIPHLLIPVVTNPRKASKALQKVVDEMENRYELFSKIGVRNIAGYNTKVEEFNASSEQKQIPLTLIVVIVDELADLMMVASKEVEDAIIRLGQKARAAGIHMILATQRPSVDVISGLIKANVPSRMAFAVSSGTDSRTILDENGAEKLLGRGDMLFKPIDENHPVRLQGSFISDDDVERIVNFIKDQAEADYDDAFDPGEVSDNDPGFSGNGGAAEGDPLFEEAKALVLETQKASASMIQRRLSVGFNRATRLMDELEEAGVIGPAEGTKPRKVLQTN</sequence>
<gene>
    <name type="primary">ftsK</name>
    <name type="ordered locus">M6_Spy0396</name>
</gene>
<comment type="function">
    <text evidence="1">Essential cell division protein that coordinates cell division and chromosome segregation. The N-terminus is involved in assembly of the cell-division machinery. The C-terminus functions as a DNA motor that moves dsDNA in an ATP-dependent manner towards the difSL recombination site, which is located within the replication terminus region. Required for activation of the XerS recombinase, allowing activation of chromosome unlinking by recombination (By similarity).</text>
</comment>
<comment type="subunit">
    <text evidence="1">Homohexamer. Forms a ring that surrounds DNA (By similarity).</text>
</comment>
<comment type="subcellular location">
    <subcellularLocation>
        <location evidence="1">Cell membrane</location>
        <topology evidence="1">Multi-pass membrane protein</topology>
    </subcellularLocation>
    <text evidence="1">Located at the septum.</text>
</comment>
<comment type="domain">
    <text evidence="1">Consists of an N-terminal domain, which is sufficient for the localization to the septal ring and is required for cell division, followed by a linker domain, and a C-terminal domain, which forms the translocation motor involved in chromosome segregation. The C-terminal domain can be further subdivided into alpha, beta and gamma subdomains. The alpha and beta subdomains form the DNA pump, and the gamma subdomain is a regulatory subdomain (By similarity).</text>
</comment>
<comment type="similarity">
    <text evidence="5">Belongs to the FtsK/SpoIIIE/SftA family.</text>
</comment>
<accession>Q5XDI2</accession>
<evidence type="ECO:0000250" key="1"/>
<evidence type="ECO:0000255" key="2"/>
<evidence type="ECO:0000255" key="3">
    <source>
        <dbReference type="PROSITE-ProRule" id="PRU00289"/>
    </source>
</evidence>
<evidence type="ECO:0000256" key="4">
    <source>
        <dbReference type="SAM" id="MobiDB-lite"/>
    </source>
</evidence>
<evidence type="ECO:0000305" key="5"/>